<protein>
    <recommendedName>
        <fullName evidence="1">Vacuolar membrane protease</fullName>
        <ecNumber evidence="6">3.4.-.-</ecNumber>
    </recommendedName>
    <alternativeName>
        <fullName evidence="1">FXNA-related family protease 1</fullName>
    </alternativeName>
</protein>
<dbReference type="EC" id="3.4.-.-" evidence="6"/>
<dbReference type="EMBL" id="GG692396">
    <property type="protein sequence ID" value="EER35161.1"/>
    <property type="molecule type" value="Genomic_DNA"/>
</dbReference>
<dbReference type="RefSeq" id="XP_002547716.1">
    <property type="nucleotide sequence ID" value="XM_002547670.1"/>
</dbReference>
<dbReference type="SMR" id="C5M545"/>
<dbReference type="EnsemblFungi" id="CTRG_02023-t43_1">
    <property type="protein sequence ID" value="CTRG_02023-t43_1-p1"/>
    <property type="gene ID" value="CTRG_02023"/>
</dbReference>
<dbReference type="GeneID" id="8296379"/>
<dbReference type="KEGG" id="ctp:CTRG_02023"/>
<dbReference type="VEuPathDB" id="FungiDB:CTRG_02023"/>
<dbReference type="eggNOG" id="KOG2194">
    <property type="taxonomic scope" value="Eukaryota"/>
</dbReference>
<dbReference type="HOGENOM" id="CLU_006412_1_0_1"/>
<dbReference type="OrthoDB" id="76293at2759"/>
<dbReference type="Proteomes" id="UP000002037">
    <property type="component" value="Unassembled WGS sequence"/>
</dbReference>
<dbReference type="GO" id="GO:0005774">
    <property type="term" value="C:vacuolar membrane"/>
    <property type="evidence" value="ECO:0007669"/>
    <property type="project" value="UniProtKB-SubCell"/>
</dbReference>
<dbReference type="GO" id="GO:0046872">
    <property type="term" value="F:metal ion binding"/>
    <property type="evidence" value="ECO:0007669"/>
    <property type="project" value="UniProtKB-KW"/>
</dbReference>
<dbReference type="GO" id="GO:0008235">
    <property type="term" value="F:metalloexopeptidase activity"/>
    <property type="evidence" value="ECO:0007669"/>
    <property type="project" value="InterPro"/>
</dbReference>
<dbReference type="GO" id="GO:0006508">
    <property type="term" value="P:proteolysis"/>
    <property type="evidence" value="ECO:0007669"/>
    <property type="project" value="UniProtKB-KW"/>
</dbReference>
<dbReference type="CDD" id="cd03875">
    <property type="entry name" value="M28_Fxna_like"/>
    <property type="match status" value="1"/>
</dbReference>
<dbReference type="Gene3D" id="3.40.630.10">
    <property type="entry name" value="Zn peptidases"/>
    <property type="match status" value="1"/>
</dbReference>
<dbReference type="InterPro" id="IPR048024">
    <property type="entry name" value="Fxna-like_M28_dom"/>
</dbReference>
<dbReference type="InterPro" id="IPR045175">
    <property type="entry name" value="M28_fam"/>
</dbReference>
<dbReference type="InterPro" id="IPR007484">
    <property type="entry name" value="Peptidase_M28"/>
</dbReference>
<dbReference type="InterPro" id="IPR053975">
    <property type="entry name" value="PFF1_C"/>
</dbReference>
<dbReference type="InterPro" id="IPR053976">
    <property type="entry name" value="PFF1_TM"/>
</dbReference>
<dbReference type="PANTHER" id="PTHR12147">
    <property type="entry name" value="METALLOPEPTIDASE M28 FAMILY MEMBER"/>
    <property type="match status" value="1"/>
</dbReference>
<dbReference type="PANTHER" id="PTHR12147:SF58">
    <property type="entry name" value="VACUOLAR MEMBRANE PROTEASE"/>
    <property type="match status" value="1"/>
</dbReference>
<dbReference type="Pfam" id="PF04389">
    <property type="entry name" value="Peptidase_M28"/>
    <property type="match status" value="1"/>
</dbReference>
<dbReference type="Pfam" id="PF22250">
    <property type="entry name" value="PFF1_C"/>
    <property type="match status" value="1"/>
</dbReference>
<dbReference type="Pfam" id="PF22251">
    <property type="entry name" value="PFF1_TM"/>
    <property type="match status" value="2"/>
</dbReference>
<dbReference type="SUPFAM" id="SSF53187">
    <property type="entry name" value="Zn-dependent exopeptidases"/>
    <property type="match status" value="1"/>
</dbReference>
<reference key="1">
    <citation type="journal article" date="2009" name="Nature">
        <title>Evolution of pathogenicity and sexual reproduction in eight Candida genomes.</title>
        <authorList>
            <person name="Butler G."/>
            <person name="Rasmussen M.D."/>
            <person name="Lin M.F."/>
            <person name="Santos M.A.S."/>
            <person name="Sakthikumar S."/>
            <person name="Munro C.A."/>
            <person name="Rheinbay E."/>
            <person name="Grabherr M."/>
            <person name="Forche A."/>
            <person name="Reedy J.L."/>
            <person name="Agrafioti I."/>
            <person name="Arnaud M.B."/>
            <person name="Bates S."/>
            <person name="Brown A.J.P."/>
            <person name="Brunke S."/>
            <person name="Costanzo M.C."/>
            <person name="Fitzpatrick D.A."/>
            <person name="de Groot P.W.J."/>
            <person name="Harris D."/>
            <person name="Hoyer L.L."/>
            <person name="Hube B."/>
            <person name="Klis F.M."/>
            <person name="Kodira C."/>
            <person name="Lennard N."/>
            <person name="Logue M.E."/>
            <person name="Martin R."/>
            <person name="Neiman A.M."/>
            <person name="Nikolaou E."/>
            <person name="Quail M.A."/>
            <person name="Quinn J."/>
            <person name="Santos M.C."/>
            <person name="Schmitzberger F.F."/>
            <person name="Sherlock G."/>
            <person name="Shah P."/>
            <person name="Silverstein K.A.T."/>
            <person name="Skrzypek M.S."/>
            <person name="Soll D."/>
            <person name="Staggs R."/>
            <person name="Stansfield I."/>
            <person name="Stumpf M.P.H."/>
            <person name="Sudbery P.E."/>
            <person name="Srikantha T."/>
            <person name="Zeng Q."/>
            <person name="Berman J."/>
            <person name="Berriman M."/>
            <person name="Heitman J."/>
            <person name="Gow N.A.R."/>
            <person name="Lorenz M.C."/>
            <person name="Birren B.W."/>
            <person name="Kellis M."/>
            <person name="Cuomo C.A."/>
        </authorList>
    </citation>
    <scope>NUCLEOTIDE SEQUENCE [LARGE SCALE GENOMIC DNA]</scope>
    <source>
        <strain>ATCC MYA-3404 / T1</strain>
    </source>
</reference>
<organism>
    <name type="scientific">Candida tropicalis (strain ATCC MYA-3404 / T1)</name>
    <name type="common">Yeast</name>
    <dbReference type="NCBI Taxonomy" id="294747"/>
    <lineage>
        <taxon>Eukaryota</taxon>
        <taxon>Fungi</taxon>
        <taxon>Dikarya</taxon>
        <taxon>Ascomycota</taxon>
        <taxon>Saccharomycotina</taxon>
        <taxon>Pichiomycetes</taxon>
        <taxon>Debaryomycetaceae</taxon>
        <taxon>Candida/Lodderomyces clade</taxon>
        <taxon>Candida</taxon>
    </lineage>
</organism>
<feature type="chain" id="PRO_0000411709" description="Vacuolar membrane protease">
    <location>
        <begin position="1"/>
        <end position="908"/>
    </location>
</feature>
<feature type="topological domain" description="Cytoplasmic" evidence="1">
    <location>
        <begin position="1"/>
        <end position="48"/>
    </location>
</feature>
<feature type="transmembrane region" description="Helical; Name=1" evidence="3">
    <location>
        <begin position="49"/>
        <end position="69"/>
    </location>
</feature>
<feature type="topological domain" description="Vacuolar" evidence="1">
    <location>
        <begin position="70"/>
        <end position="381"/>
    </location>
</feature>
<feature type="transmembrane region" description="Helical; Name=2" evidence="3">
    <location>
        <begin position="382"/>
        <end position="402"/>
    </location>
</feature>
<feature type="topological domain" description="Cytoplasmic" evidence="1">
    <location>
        <begin position="403"/>
        <end position="411"/>
    </location>
</feature>
<feature type="transmembrane region" description="Helical; Name=3" evidence="3">
    <location>
        <begin position="412"/>
        <end position="432"/>
    </location>
</feature>
<feature type="topological domain" description="Vacuolar" evidence="1">
    <location>
        <begin position="433"/>
        <end position="449"/>
    </location>
</feature>
<feature type="transmembrane region" description="Helical; Name=4" evidence="3">
    <location>
        <begin position="450"/>
        <end position="470"/>
    </location>
</feature>
<feature type="topological domain" description="Cytoplasmic" evidence="1">
    <location>
        <begin position="471"/>
        <end position="480"/>
    </location>
</feature>
<feature type="transmembrane region" description="Helical; Name=5" evidence="3">
    <location>
        <begin position="481"/>
        <end position="501"/>
    </location>
</feature>
<feature type="topological domain" description="Vacuolar" evidence="1">
    <location>
        <begin position="502"/>
        <end position="514"/>
    </location>
</feature>
<feature type="transmembrane region" description="Helical; Name=6" evidence="3">
    <location>
        <begin position="515"/>
        <end position="535"/>
    </location>
</feature>
<feature type="topological domain" description="Cytoplasmic" evidence="1">
    <location>
        <begin position="536"/>
        <end position="602"/>
    </location>
</feature>
<feature type="transmembrane region" description="Helical; Name=7" evidence="3">
    <location>
        <begin position="603"/>
        <end position="623"/>
    </location>
</feature>
<feature type="topological domain" description="Vacuolar" evidence="1">
    <location>
        <begin position="624"/>
        <end position="638"/>
    </location>
</feature>
<feature type="transmembrane region" description="Helical; Name=8" evidence="3">
    <location>
        <begin position="639"/>
        <end position="659"/>
    </location>
</feature>
<feature type="topological domain" description="Cytoplasmic" evidence="1">
    <location>
        <begin position="660"/>
        <end position="664"/>
    </location>
</feature>
<feature type="transmembrane region" description="Helical; Name=9" evidence="3">
    <location>
        <begin position="665"/>
        <end position="685"/>
    </location>
</feature>
<feature type="topological domain" description="Vacuolar" evidence="1">
    <location>
        <begin position="686"/>
        <end position="908"/>
    </location>
</feature>
<feature type="region of interest" description="Disordered" evidence="5">
    <location>
        <begin position="1"/>
        <end position="25"/>
    </location>
</feature>
<feature type="region of interest" description="Disordered" evidence="5">
    <location>
        <begin position="543"/>
        <end position="584"/>
    </location>
</feature>
<feature type="compositionally biased region" description="Polar residues" evidence="5">
    <location>
        <begin position="15"/>
        <end position="25"/>
    </location>
</feature>
<feature type="compositionally biased region" description="Acidic residues" evidence="5">
    <location>
        <begin position="562"/>
        <end position="579"/>
    </location>
</feature>
<feature type="active site" description="Proton acceptor" evidence="2">
    <location>
        <position position="221"/>
    </location>
</feature>
<feature type="binding site" evidence="2">
    <location>
        <position position="176"/>
    </location>
    <ligand>
        <name>Zn(2+)</name>
        <dbReference type="ChEBI" id="CHEBI:29105"/>
        <label>1</label>
        <note>catalytic</note>
    </ligand>
</feature>
<feature type="binding site" evidence="2">
    <location>
        <position position="188"/>
    </location>
    <ligand>
        <name>Zn(2+)</name>
        <dbReference type="ChEBI" id="CHEBI:29105"/>
        <label>1</label>
        <note>catalytic</note>
    </ligand>
</feature>
<feature type="binding site" evidence="2">
    <location>
        <position position="188"/>
    </location>
    <ligand>
        <name>Zn(2+)</name>
        <dbReference type="ChEBI" id="CHEBI:29105"/>
        <label>2</label>
        <note>catalytic</note>
    </ligand>
</feature>
<feature type="binding site" evidence="2">
    <location>
        <position position="222"/>
    </location>
    <ligand>
        <name>Zn(2+)</name>
        <dbReference type="ChEBI" id="CHEBI:29105"/>
        <label>2</label>
        <note>catalytic</note>
    </ligand>
</feature>
<feature type="binding site" evidence="2">
    <location>
        <position position="247"/>
    </location>
    <ligand>
        <name>Zn(2+)</name>
        <dbReference type="ChEBI" id="CHEBI:29105"/>
        <label>1</label>
        <note>catalytic</note>
    </ligand>
</feature>
<feature type="binding site" evidence="2">
    <location>
        <position position="319"/>
    </location>
    <ligand>
        <name>Zn(2+)</name>
        <dbReference type="ChEBI" id="CHEBI:29105"/>
        <label>2</label>
        <note>catalytic</note>
    </ligand>
</feature>
<feature type="site" description="Transition state stabilizer" evidence="2">
    <location>
        <position position="318"/>
    </location>
</feature>
<feature type="glycosylation site" description="N-linked (GlcNAc...) asparagine" evidence="4">
    <location>
        <position position="143"/>
    </location>
</feature>
<feature type="glycosylation site" description="N-linked (GlcNAc...) asparagine" evidence="4">
    <location>
        <position position="162"/>
    </location>
</feature>
<feature type="glycosylation site" description="N-linked (GlcNAc...) asparagine" evidence="4">
    <location>
        <position position="354"/>
    </location>
</feature>
<feature type="glycosylation site" description="N-linked (GlcNAc...) asparagine" evidence="4">
    <location>
        <position position="627"/>
    </location>
</feature>
<feature type="glycosylation site" description="N-linked (GlcNAc...) asparagine" evidence="4">
    <location>
        <position position="752"/>
    </location>
</feature>
<feature type="glycosylation site" description="N-linked (GlcNAc...) asparagine" evidence="4">
    <location>
        <position position="764"/>
    </location>
</feature>
<accession>C5M545</accession>
<name>PFF1_CANTT</name>
<comment type="function">
    <text evidence="1">May be involved in vacuolar sorting and osmoregulation.</text>
</comment>
<comment type="cofactor">
    <cofactor evidence="2">
        <name>Zn(2+)</name>
        <dbReference type="ChEBI" id="CHEBI:29105"/>
    </cofactor>
    <text evidence="2">Binds 2 Zn(2+) ions per subunit.</text>
</comment>
<comment type="subcellular location">
    <subcellularLocation>
        <location evidence="1">Vacuole membrane</location>
        <topology evidence="3">Multi-pass membrane protein</topology>
    </subcellularLocation>
</comment>
<comment type="similarity">
    <text evidence="6">Belongs to the peptidase M28 family.</text>
</comment>
<gene>
    <name type="ORF">CTRG_02023</name>
</gene>
<keyword id="KW-0325">Glycoprotein</keyword>
<keyword id="KW-0378">Hydrolase</keyword>
<keyword id="KW-0472">Membrane</keyword>
<keyword id="KW-0479">Metal-binding</keyword>
<keyword id="KW-0482">Metalloprotease</keyword>
<keyword id="KW-0645">Protease</keyword>
<keyword id="KW-1185">Reference proteome</keyword>
<keyword id="KW-0812">Transmembrane</keyword>
<keyword id="KW-1133">Transmembrane helix</keyword>
<keyword id="KW-0926">Vacuole</keyword>
<keyword id="KW-0862">Zinc</keyword>
<sequence>MTSGEEEEGTREQVPVSQPTGTTSIVSTKEKQPNIFIRAIRATFGYRKTSLTLFVLLTIFFTVAFSSYDNSLDFTIDLPETKFEKQLLDSSWLDLQNIARYPHSYGSHANDKVHDYLESRISQTIKGKPFIEFDNGDEKILYNSSKKVVSYYEGNNLLVRVNGTDSSLPAFLLSAHYDSVPSSYGVTDDGMGIASLLGVLSYLANNKQPKRTVIFNFNNDEEFGLYGAQAFVTHPWFKQIQYFLNLEGTGAGGKAILFRGTDYGIVKHFDKVRYPYATSIFQQGFNNRLIHSETDYKVYKEAGLRGLDLAFYKPRDIYHTGEDNIKNINIRSLWHMLSNSIDFTNFISNSIIDNDTGKDEPAIYLSVLNYFFSTSVTTLNTINMVLIVLFPVLSGPLLFITVRYKKWNIGTANLFSLPLAIVITSLVGAVVVNQGFRLVNEFLPASRPMLLVTTTTSILLLTYYILLNGINFVSPSGDQKLVSIIQISFIYWIALIFVTRGLSQNAIGDDHTGEFAFTILFLLEATASLFGLIGWTFTRSVKEPTGDEEPLLNGRMERYVDGSDDEDDVEEEDDEDQSEEENHQHEMTVKHLMQHFGYDWSLQFLLIVPISSLVIYNSGWLVIDGINKSIQESLVAENFIYLIIQLFSQFWILPILPFVYKLNRFMVLGLIAFALVGVTLISSVDPFNQDNPLKLRFIERDGVAHVYGRTGVGISNILGDMPSVKESGVGIKCDSLPDGNEDCSYKAYLPGNSTIPSLSVKSINSTAQQAYINFGAIQINAPESRECSLEFKKVKAIVVYSGEITAKNFKAIPDGFSEDSKGNLYYKDVSGIDVAQLNKLGWNKKFNFGFYWLPDIDDDVAALPIHVECFWSDITIPAYDELLHYTPNWVTWANREKGLVSLTNRIEV</sequence>
<evidence type="ECO:0000250" key="1">
    <source>
        <dbReference type="UniProtKB" id="P38244"/>
    </source>
</evidence>
<evidence type="ECO:0000250" key="2">
    <source>
        <dbReference type="UniProtKB" id="P80561"/>
    </source>
</evidence>
<evidence type="ECO:0000255" key="3"/>
<evidence type="ECO:0000255" key="4">
    <source>
        <dbReference type="PROSITE-ProRule" id="PRU00498"/>
    </source>
</evidence>
<evidence type="ECO:0000256" key="5">
    <source>
        <dbReference type="SAM" id="MobiDB-lite"/>
    </source>
</evidence>
<evidence type="ECO:0000305" key="6"/>
<proteinExistence type="inferred from homology"/>